<reference key="1">
    <citation type="journal article" date="2012" name="Nat. Genet.">
        <title>Lifestyle transitions in plant pathogenic Colletotrichum fungi deciphered by genome and transcriptome analyses.</title>
        <authorList>
            <person name="O'Connell R.J."/>
            <person name="Thon M.R."/>
            <person name="Hacquard S."/>
            <person name="Amyotte S.G."/>
            <person name="Kleemann J."/>
            <person name="Torres M.F."/>
            <person name="Damm U."/>
            <person name="Buiate E.A."/>
            <person name="Epstein L."/>
            <person name="Alkan N."/>
            <person name="Altmueller J."/>
            <person name="Alvarado-Balderrama L."/>
            <person name="Bauser C.A."/>
            <person name="Becker C."/>
            <person name="Birren B.W."/>
            <person name="Chen Z."/>
            <person name="Choi J."/>
            <person name="Crouch J.A."/>
            <person name="Duvick J.P."/>
            <person name="Farman M.A."/>
            <person name="Gan P."/>
            <person name="Heiman D."/>
            <person name="Henrissat B."/>
            <person name="Howard R.J."/>
            <person name="Kabbage M."/>
            <person name="Koch C."/>
            <person name="Kracher B."/>
            <person name="Kubo Y."/>
            <person name="Law A.D."/>
            <person name="Lebrun M.-H."/>
            <person name="Lee Y.-H."/>
            <person name="Miyara I."/>
            <person name="Moore N."/>
            <person name="Neumann U."/>
            <person name="Nordstroem K."/>
            <person name="Panaccione D.G."/>
            <person name="Panstruga R."/>
            <person name="Place M."/>
            <person name="Proctor R.H."/>
            <person name="Prusky D."/>
            <person name="Rech G."/>
            <person name="Reinhardt R."/>
            <person name="Rollins J.A."/>
            <person name="Rounsley S."/>
            <person name="Schardl C.L."/>
            <person name="Schwartz D.C."/>
            <person name="Shenoy N."/>
            <person name="Shirasu K."/>
            <person name="Sikhakolli U.R."/>
            <person name="Stueber K."/>
            <person name="Sukno S.A."/>
            <person name="Sweigard J.A."/>
            <person name="Takano Y."/>
            <person name="Takahara H."/>
            <person name="Trail F."/>
            <person name="van der Does H.C."/>
            <person name="Voll L.M."/>
            <person name="Will I."/>
            <person name="Young S."/>
            <person name="Zeng Q."/>
            <person name="Zhang J."/>
            <person name="Zhou S."/>
            <person name="Dickman M.B."/>
            <person name="Schulze-Lefert P."/>
            <person name="Ver Loren van Themaat E."/>
            <person name="Ma L.-J."/>
            <person name="Vaillancourt L.J."/>
        </authorList>
    </citation>
    <scope>NUCLEOTIDE SEQUENCE [LARGE SCALE GENOMIC DNA]</scope>
    <source>
        <strain>M1.001 / M2 / FGSC 10212</strain>
    </source>
</reference>
<evidence type="ECO:0000250" key="1">
    <source>
        <dbReference type="UniProtKB" id="P15367"/>
    </source>
</evidence>
<evidence type="ECO:0000250" key="2">
    <source>
        <dbReference type="UniProtKB" id="P67812"/>
    </source>
</evidence>
<evidence type="ECO:0000255" key="3"/>
<evidence type="ECO:0000305" key="4"/>
<organism>
    <name type="scientific">Colletotrichum graminicola (strain M1.001 / M2 / FGSC 10212)</name>
    <name type="common">Maize anthracnose fungus</name>
    <name type="synonym">Glomerella graminicola</name>
    <dbReference type="NCBI Taxonomy" id="645133"/>
    <lineage>
        <taxon>Eukaryota</taxon>
        <taxon>Fungi</taxon>
        <taxon>Dikarya</taxon>
        <taxon>Ascomycota</taxon>
        <taxon>Pezizomycotina</taxon>
        <taxon>Sordariomycetes</taxon>
        <taxon>Hypocreomycetidae</taxon>
        <taxon>Glomerellales</taxon>
        <taxon>Glomerellaceae</taxon>
        <taxon>Colletotrichum</taxon>
        <taxon>Colletotrichum graminicola species complex</taxon>
    </lineage>
</organism>
<sequence length="172" mass="19059">MLSSLANPRQAASQLLNFALILSTAFMMWKGLSVVSDSPSPIVVVLSGSMEPAFQRGDLLFLWNRNIIQETEVGEIVVYEVRGKNIPIVHRVVRKFGAGSEAKLLTKGDNNQGSDEELYAKDQDFLVRKDIIGSVVAYIPFVGYVTILLSEYPWLKTAMLGIMGLVVVLQRE</sequence>
<keyword id="KW-0256">Endoplasmic reticulum</keyword>
<keyword id="KW-0378">Hydrolase</keyword>
<keyword id="KW-0472">Membrane</keyword>
<keyword id="KW-0645">Protease</keyword>
<keyword id="KW-1185">Reference proteome</keyword>
<keyword id="KW-0735">Signal-anchor</keyword>
<keyword id="KW-0812">Transmembrane</keyword>
<keyword id="KW-1133">Transmembrane helix</keyword>
<gene>
    <name type="primary">SEC11</name>
    <name type="ORF">GLRG_10877</name>
</gene>
<dbReference type="EC" id="3.4.21.89" evidence="1"/>
<dbReference type="EMBL" id="GG697398">
    <property type="protein sequence ID" value="EFQ35722.1"/>
    <property type="molecule type" value="Genomic_DNA"/>
</dbReference>
<dbReference type="RefSeq" id="XP_008099742.1">
    <property type="nucleotide sequence ID" value="XM_008101551.1"/>
</dbReference>
<dbReference type="SMR" id="E3QXY4"/>
<dbReference type="STRING" id="645133.E3QXY4"/>
<dbReference type="EnsemblFungi" id="EFQ35722">
    <property type="protein sequence ID" value="EFQ35722"/>
    <property type="gene ID" value="GLRG_10877"/>
</dbReference>
<dbReference type="GeneID" id="24416242"/>
<dbReference type="VEuPathDB" id="FungiDB:GLRG_10877"/>
<dbReference type="eggNOG" id="KOG3342">
    <property type="taxonomic scope" value="Eukaryota"/>
</dbReference>
<dbReference type="HOGENOM" id="CLU_089996_0_0_1"/>
<dbReference type="OrthoDB" id="10257561at2759"/>
<dbReference type="Proteomes" id="UP000008782">
    <property type="component" value="Unassembled WGS sequence"/>
</dbReference>
<dbReference type="GO" id="GO:0005787">
    <property type="term" value="C:signal peptidase complex"/>
    <property type="evidence" value="ECO:0007669"/>
    <property type="project" value="EnsemblFungi"/>
</dbReference>
<dbReference type="GO" id="GO:0004252">
    <property type="term" value="F:serine-type endopeptidase activity"/>
    <property type="evidence" value="ECO:0007669"/>
    <property type="project" value="UniProtKB-EC"/>
</dbReference>
<dbReference type="GO" id="GO:0045047">
    <property type="term" value="P:protein targeting to ER"/>
    <property type="evidence" value="ECO:0007669"/>
    <property type="project" value="EnsemblFungi"/>
</dbReference>
<dbReference type="GO" id="GO:0006465">
    <property type="term" value="P:signal peptide processing"/>
    <property type="evidence" value="ECO:0007669"/>
    <property type="project" value="EnsemblFungi"/>
</dbReference>
<dbReference type="CDD" id="cd06462">
    <property type="entry name" value="Peptidase_S24_S26"/>
    <property type="match status" value="1"/>
</dbReference>
<dbReference type="Gene3D" id="2.10.109.10">
    <property type="entry name" value="Umud Fragment, subunit A"/>
    <property type="match status" value="1"/>
</dbReference>
<dbReference type="InterPro" id="IPR036286">
    <property type="entry name" value="LexA/Signal_pep-like_sf"/>
</dbReference>
<dbReference type="InterPro" id="IPR019756">
    <property type="entry name" value="Pept_S26A_signal_pept_1_Ser-AS"/>
</dbReference>
<dbReference type="InterPro" id="IPR001733">
    <property type="entry name" value="Peptidase_S26B"/>
</dbReference>
<dbReference type="NCBIfam" id="TIGR02228">
    <property type="entry name" value="sigpep_I_arch"/>
    <property type="match status" value="1"/>
</dbReference>
<dbReference type="PANTHER" id="PTHR10806">
    <property type="entry name" value="SIGNAL PEPTIDASE COMPLEX CATALYTIC SUBUNIT SEC11"/>
    <property type="match status" value="1"/>
</dbReference>
<dbReference type="PANTHER" id="PTHR10806:SF6">
    <property type="entry name" value="SIGNAL PEPTIDASE COMPLEX CATALYTIC SUBUNIT SEC11"/>
    <property type="match status" value="1"/>
</dbReference>
<dbReference type="PRINTS" id="PR00728">
    <property type="entry name" value="SIGNALPTASE"/>
</dbReference>
<dbReference type="SUPFAM" id="SSF51306">
    <property type="entry name" value="LexA/Signal peptidase"/>
    <property type="match status" value="1"/>
</dbReference>
<dbReference type="PROSITE" id="PS00501">
    <property type="entry name" value="SPASE_I_1"/>
    <property type="match status" value="1"/>
</dbReference>
<accession>E3QXY4</accession>
<comment type="function">
    <text evidence="1 2">Catalytic component of the signal peptidase complex (SPC) which catalyzes the cleavage of N-terminal signal sequences from nascent proteins as they are translocated into the lumen of the endoplasmic reticulum (By similarity). Specifically cleaves N-terminal signal peptides that contain a hydrophobic alpha-helix (h-region) shorter than 18-20 amino acids (By similarity).</text>
</comment>
<comment type="catalytic activity">
    <reaction evidence="1">
        <text>Cleavage of hydrophobic, N-terminal signal or leader sequences from secreted and periplasmic proteins.</text>
        <dbReference type="EC" id="3.4.21.89"/>
    </reaction>
</comment>
<comment type="subunit">
    <text evidence="1 2">Component of the signal peptidase complex (SPC) composed of a catalytic subunit SEC11 and three accessory subunits SPC1, SPC2 and SPC3 (By similarity). The complex induces a local thinning of the ER membrane which is used to measure the length of the signal peptide (SP) h-region of protein substrates. This ensures the selectivity of the complex towards h-regions shorter than 18-20 amino acids (By similarity). SPC associates with the translocon complex (By similarity).</text>
</comment>
<comment type="subcellular location">
    <subcellularLocation>
        <location evidence="1">Endoplasmic reticulum membrane</location>
        <topology evidence="1">Single-pass type II membrane protein</topology>
    </subcellularLocation>
</comment>
<comment type="domain">
    <text evidence="2">The C-terminal short (CTS) helix is essential for catalytic activity. It may be accommodated as a transmembrane helix in the thinned membrane environment of the complex, similarly to the signal peptide in the complex substrates.</text>
</comment>
<comment type="similarity">
    <text evidence="4">Belongs to the peptidase S26B family.</text>
</comment>
<name>SEC11_COLGM</name>
<protein>
    <recommendedName>
        <fullName>Signal peptidase complex catalytic subunit SEC11</fullName>
        <ecNumber evidence="1">3.4.21.89</ecNumber>
    </recommendedName>
    <alternativeName>
        <fullName>Signal peptidase I</fullName>
    </alternativeName>
</protein>
<proteinExistence type="inferred from homology"/>
<feature type="chain" id="PRO_0000412327" description="Signal peptidase complex catalytic subunit SEC11">
    <location>
        <begin position="1"/>
        <end position="172"/>
    </location>
</feature>
<feature type="topological domain" description="Cytoplasmic" evidence="4">
    <location>
        <begin position="1"/>
        <end position="14"/>
    </location>
</feature>
<feature type="transmembrane region" description="Helical; Signal-anchor for type II membrane protein" evidence="3">
    <location>
        <begin position="15"/>
        <end position="35"/>
    </location>
</feature>
<feature type="topological domain" description="Lumenal" evidence="4">
    <location>
        <begin position="36"/>
        <end position="172"/>
    </location>
</feature>
<feature type="region of interest" description="C-terminal short (CTS) helix" evidence="2">
    <location>
        <begin position="158"/>
        <end position="169"/>
    </location>
</feature>
<feature type="active site" description="Charge relay system" evidence="1">
    <location>
        <position position="49"/>
    </location>
</feature>
<feature type="active site" description="Charge relay system" evidence="1">
    <location>
        <position position="90"/>
    </location>
</feature>
<feature type="active site" description="Charge relay system" evidence="1">
    <location>
        <position position="115"/>
    </location>
</feature>